<comment type="function">
    <text evidence="1">Catalyzes the conversion of 4-hydroxy-tetrahydrodipicolinate (HTPA) to tetrahydrodipicolinate.</text>
</comment>
<comment type="catalytic activity">
    <reaction evidence="1">
        <text>(S)-2,3,4,5-tetrahydrodipicolinate + NAD(+) + H2O = (2S,4S)-4-hydroxy-2,3,4,5-tetrahydrodipicolinate + NADH + H(+)</text>
        <dbReference type="Rhea" id="RHEA:35323"/>
        <dbReference type="ChEBI" id="CHEBI:15377"/>
        <dbReference type="ChEBI" id="CHEBI:15378"/>
        <dbReference type="ChEBI" id="CHEBI:16845"/>
        <dbReference type="ChEBI" id="CHEBI:57540"/>
        <dbReference type="ChEBI" id="CHEBI:57945"/>
        <dbReference type="ChEBI" id="CHEBI:67139"/>
        <dbReference type="EC" id="1.17.1.8"/>
    </reaction>
</comment>
<comment type="catalytic activity">
    <reaction evidence="1">
        <text>(S)-2,3,4,5-tetrahydrodipicolinate + NADP(+) + H2O = (2S,4S)-4-hydroxy-2,3,4,5-tetrahydrodipicolinate + NADPH + H(+)</text>
        <dbReference type="Rhea" id="RHEA:35331"/>
        <dbReference type="ChEBI" id="CHEBI:15377"/>
        <dbReference type="ChEBI" id="CHEBI:15378"/>
        <dbReference type="ChEBI" id="CHEBI:16845"/>
        <dbReference type="ChEBI" id="CHEBI:57783"/>
        <dbReference type="ChEBI" id="CHEBI:58349"/>
        <dbReference type="ChEBI" id="CHEBI:67139"/>
        <dbReference type="EC" id="1.17.1.8"/>
    </reaction>
</comment>
<comment type="pathway">
    <text evidence="1">Amino-acid biosynthesis; L-lysine biosynthesis via DAP pathway; (S)-tetrahydrodipicolinate from L-aspartate: step 4/4.</text>
</comment>
<comment type="subunit">
    <text evidence="1">Homotetramer.</text>
</comment>
<comment type="subcellular location">
    <subcellularLocation>
        <location evidence="1">Cytoplasm</location>
    </subcellularLocation>
</comment>
<comment type="similarity">
    <text evidence="1">Belongs to the DapB family.</text>
</comment>
<comment type="caution">
    <text evidence="2">Was originally thought to be a dihydrodipicolinate reductase (DHDPR), catalyzing the conversion of dihydrodipicolinate to tetrahydrodipicolinate. However, it was shown in E.coli that the substrate of the enzymatic reaction is not dihydrodipicolinate (DHDP) but in fact (2S,4S)-4-hydroxy-2,3,4,5-tetrahydrodipicolinic acid (HTPA), the product released by the DapA-catalyzed reaction.</text>
</comment>
<sequence length="273" mass="28730">MHDANIRVAIAGAGGRMGRQLIQAALALEGVQLGAALEREGSSLLGSDAGELAGAGKTGVTVQSSLDAVKDDFDVFIDFTRPEGTLNHLAFCRQHGKGMVIGTTGFDEAGKQAIRDAAADIAIVFAANFSVGVNVMLKLLEKAAKVMGDYTDIEIIEAHHRHKVDAPSGTALAMGEAIAHALDKDLKDCAVYSREGHTGERVPGTIGFATVRAGDIVGEHTAMFADIGERLEITHKASSRMTFANGAVRSALWLSGKESGLFDMRDVLDLNSL</sequence>
<keyword id="KW-0028">Amino-acid biosynthesis</keyword>
<keyword id="KW-0963">Cytoplasm</keyword>
<keyword id="KW-0220">Diaminopimelate biosynthesis</keyword>
<keyword id="KW-0457">Lysine biosynthesis</keyword>
<keyword id="KW-0520">NAD</keyword>
<keyword id="KW-0521">NADP</keyword>
<keyword id="KW-0560">Oxidoreductase</keyword>
<accession>A7ZVX9</accession>
<organism>
    <name type="scientific">Escherichia coli O9:H4 (strain HS)</name>
    <dbReference type="NCBI Taxonomy" id="331112"/>
    <lineage>
        <taxon>Bacteria</taxon>
        <taxon>Pseudomonadati</taxon>
        <taxon>Pseudomonadota</taxon>
        <taxon>Gammaproteobacteria</taxon>
        <taxon>Enterobacterales</taxon>
        <taxon>Enterobacteriaceae</taxon>
        <taxon>Escherichia</taxon>
    </lineage>
</organism>
<evidence type="ECO:0000255" key="1">
    <source>
        <dbReference type="HAMAP-Rule" id="MF_00102"/>
    </source>
</evidence>
<evidence type="ECO:0000305" key="2"/>
<feature type="chain" id="PRO_1000057684" description="4-hydroxy-tetrahydrodipicolinate reductase">
    <location>
        <begin position="1"/>
        <end position="273"/>
    </location>
</feature>
<feature type="active site" description="Proton donor/acceptor" evidence="1">
    <location>
        <position position="159"/>
    </location>
</feature>
<feature type="active site" description="Proton donor" evidence="1">
    <location>
        <position position="163"/>
    </location>
</feature>
<feature type="binding site" evidence="1">
    <location>
        <begin position="12"/>
        <end position="17"/>
    </location>
    <ligand>
        <name>NAD(+)</name>
        <dbReference type="ChEBI" id="CHEBI:57540"/>
    </ligand>
</feature>
<feature type="binding site" evidence="1">
    <location>
        <position position="38"/>
    </location>
    <ligand>
        <name>NAD(+)</name>
        <dbReference type="ChEBI" id="CHEBI:57540"/>
    </ligand>
</feature>
<feature type="binding site" evidence="1">
    <location>
        <position position="39"/>
    </location>
    <ligand>
        <name>NADP(+)</name>
        <dbReference type="ChEBI" id="CHEBI:58349"/>
    </ligand>
</feature>
<feature type="binding site" evidence="1">
    <location>
        <begin position="102"/>
        <end position="104"/>
    </location>
    <ligand>
        <name>NAD(+)</name>
        <dbReference type="ChEBI" id="CHEBI:57540"/>
    </ligand>
</feature>
<feature type="binding site" evidence="1">
    <location>
        <begin position="126"/>
        <end position="129"/>
    </location>
    <ligand>
        <name>NAD(+)</name>
        <dbReference type="ChEBI" id="CHEBI:57540"/>
    </ligand>
</feature>
<feature type="binding site" evidence="1">
    <location>
        <position position="160"/>
    </location>
    <ligand>
        <name>(S)-2,3,4,5-tetrahydrodipicolinate</name>
        <dbReference type="ChEBI" id="CHEBI:16845"/>
    </ligand>
</feature>
<feature type="binding site" evidence="1">
    <location>
        <begin position="169"/>
        <end position="170"/>
    </location>
    <ligand>
        <name>(S)-2,3,4,5-tetrahydrodipicolinate</name>
        <dbReference type="ChEBI" id="CHEBI:16845"/>
    </ligand>
</feature>
<protein>
    <recommendedName>
        <fullName evidence="1">4-hydroxy-tetrahydrodipicolinate reductase</fullName>
        <shortName evidence="1">HTPA reductase</shortName>
        <ecNumber evidence="1">1.17.1.8</ecNumber>
    </recommendedName>
</protein>
<reference key="1">
    <citation type="journal article" date="2008" name="J. Bacteriol.">
        <title>The pangenome structure of Escherichia coli: comparative genomic analysis of E. coli commensal and pathogenic isolates.</title>
        <authorList>
            <person name="Rasko D.A."/>
            <person name="Rosovitz M.J."/>
            <person name="Myers G.S.A."/>
            <person name="Mongodin E.F."/>
            <person name="Fricke W.F."/>
            <person name="Gajer P."/>
            <person name="Crabtree J."/>
            <person name="Sebaihia M."/>
            <person name="Thomson N.R."/>
            <person name="Chaudhuri R."/>
            <person name="Henderson I.R."/>
            <person name="Sperandio V."/>
            <person name="Ravel J."/>
        </authorList>
    </citation>
    <scope>NUCLEOTIDE SEQUENCE [LARGE SCALE GENOMIC DNA]</scope>
    <source>
        <strain>HS</strain>
    </source>
</reference>
<dbReference type="EC" id="1.17.1.8" evidence="1"/>
<dbReference type="EMBL" id="CP000802">
    <property type="protein sequence ID" value="ABV04433.1"/>
    <property type="molecule type" value="Genomic_DNA"/>
</dbReference>
<dbReference type="RefSeq" id="WP_000543605.1">
    <property type="nucleotide sequence ID" value="NC_009800.1"/>
</dbReference>
<dbReference type="SMR" id="A7ZVX9"/>
<dbReference type="KEGG" id="ecx:EcHS_A0033"/>
<dbReference type="HOGENOM" id="CLU_047479_2_1_6"/>
<dbReference type="UniPathway" id="UPA00034">
    <property type="reaction ID" value="UER00018"/>
</dbReference>
<dbReference type="GO" id="GO:0005829">
    <property type="term" value="C:cytosol"/>
    <property type="evidence" value="ECO:0007669"/>
    <property type="project" value="TreeGrafter"/>
</dbReference>
<dbReference type="GO" id="GO:0008839">
    <property type="term" value="F:4-hydroxy-tetrahydrodipicolinate reductase"/>
    <property type="evidence" value="ECO:0007669"/>
    <property type="project" value="UniProtKB-EC"/>
</dbReference>
<dbReference type="GO" id="GO:0051287">
    <property type="term" value="F:NAD binding"/>
    <property type="evidence" value="ECO:0007669"/>
    <property type="project" value="UniProtKB-UniRule"/>
</dbReference>
<dbReference type="GO" id="GO:0050661">
    <property type="term" value="F:NADP binding"/>
    <property type="evidence" value="ECO:0007669"/>
    <property type="project" value="UniProtKB-UniRule"/>
</dbReference>
<dbReference type="GO" id="GO:0016726">
    <property type="term" value="F:oxidoreductase activity, acting on CH or CH2 groups, NAD or NADP as acceptor"/>
    <property type="evidence" value="ECO:0007669"/>
    <property type="project" value="UniProtKB-UniRule"/>
</dbReference>
<dbReference type="GO" id="GO:0019877">
    <property type="term" value="P:diaminopimelate biosynthetic process"/>
    <property type="evidence" value="ECO:0007669"/>
    <property type="project" value="UniProtKB-UniRule"/>
</dbReference>
<dbReference type="GO" id="GO:0009089">
    <property type="term" value="P:lysine biosynthetic process via diaminopimelate"/>
    <property type="evidence" value="ECO:0007669"/>
    <property type="project" value="UniProtKB-UniRule"/>
</dbReference>
<dbReference type="CDD" id="cd02274">
    <property type="entry name" value="DHDPR_N"/>
    <property type="match status" value="1"/>
</dbReference>
<dbReference type="FunFam" id="3.30.360.10:FF:000004">
    <property type="entry name" value="4-hydroxy-tetrahydrodipicolinate reductase"/>
    <property type="match status" value="1"/>
</dbReference>
<dbReference type="FunFam" id="3.40.50.720:FF:000048">
    <property type="entry name" value="4-hydroxy-tetrahydrodipicolinate reductase"/>
    <property type="match status" value="1"/>
</dbReference>
<dbReference type="Gene3D" id="3.30.360.10">
    <property type="entry name" value="Dihydrodipicolinate Reductase, domain 2"/>
    <property type="match status" value="1"/>
</dbReference>
<dbReference type="Gene3D" id="3.40.50.720">
    <property type="entry name" value="NAD(P)-binding Rossmann-like Domain"/>
    <property type="match status" value="1"/>
</dbReference>
<dbReference type="HAMAP" id="MF_00102">
    <property type="entry name" value="DapB"/>
    <property type="match status" value="1"/>
</dbReference>
<dbReference type="InterPro" id="IPR022663">
    <property type="entry name" value="DapB_C"/>
</dbReference>
<dbReference type="InterPro" id="IPR000846">
    <property type="entry name" value="DapB_N"/>
</dbReference>
<dbReference type="InterPro" id="IPR022664">
    <property type="entry name" value="DapB_N_CS"/>
</dbReference>
<dbReference type="InterPro" id="IPR023940">
    <property type="entry name" value="DHDPR_bac"/>
</dbReference>
<dbReference type="InterPro" id="IPR036291">
    <property type="entry name" value="NAD(P)-bd_dom_sf"/>
</dbReference>
<dbReference type="NCBIfam" id="TIGR00036">
    <property type="entry name" value="dapB"/>
    <property type="match status" value="1"/>
</dbReference>
<dbReference type="PANTHER" id="PTHR20836:SF0">
    <property type="entry name" value="4-HYDROXY-TETRAHYDRODIPICOLINATE REDUCTASE 1, CHLOROPLASTIC-RELATED"/>
    <property type="match status" value="1"/>
</dbReference>
<dbReference type="PANTHER" id="PTHR20836">
    <property type="entry name" value="DIHYDRODIPICOLINATE REDUCTASE"/>
    <property type="match status" value="1"/>
</dbReference>
<dbReference type="Pfam" id="PF05173">
    <property type="entry name" value="DapB_C"/>
    <property type="match status" value="1"/>
</dbReference>
<dbReference type="Pfam" id="PF01113">
    <property type="entry name" value="DapB_N"/>
    <property type="match status" value="1"/>
</dbReference>
<dbReference type="PIRSF" id="PIRSF000161">
    <property type="entry name" value="DHPR"/>
    <property type="match status" value="1"/>
</dbReference>
<dbReference type="SUPFAM" id="SSF55347">
    <property type="entry name" value="Glyceraldehyde-3-phosphate dehydrogenase-like, C-terminal domain"/>
    <property type="match status" value="1"/>
</dbReference>
<dbReference type="SUPFAM" id="SSF51735">
    <property type="entry name" value="NAD(P)-binding Rossmann-fold domains"/>
    <property type="match status" value="1"/>
</dbReference>
<dbReference type="PROSITE" id="PS01298">
    <property type="entry name" value="DAPB"/>
    <property type="match status" value="1"/>
</dbReference>
<name>DAPB_ECOHS</name>
<gene>
    <name evidence="1" type="primary">dapB</name>
    <name type="ordered locus">EcHS_A0033</name>
</gene>
<proteinExistence type="inferred from homology"/>